<dbReference type="EMBL" id="CP000614">
    <property type="protein sequence ID" value="ABO53658.1"/>
    <property type="molecule type" value="Genomic_DNA"/>
</dbReference>
<dbReference type="SMR" id="A4JBK5"/>
<dbReference type="KEGG" id="bvi:Bcep1808_0646"/>
<dbReference type="eggNOG" id="COG0103">
    <property type="taxonomic scope" value="Bacteria"/>
</dbReference>
<dbReference type="HOGENOM" id="CLU_046483_2_1_4"/>
<dbReference type="Proteomes" id="UP000002287">
    <property type="component" value="Chromosome 1"/>
</dbReference>
<dbReference type="GO" id="GO:0022627">
    <property type="term" value="C:cytosolic small ribosomal subunit"/>
    <property type="evidence" value="ECO:0007669"/>
    <property type="project" value="TreeGrafter"/>
</dbReference>
<dbReference type="GO" id="GO:0003723">
    <property type="term" value="F:RNA binding"/>
    <property type="evidence" value="ECO:0007669"/>
    <property type="project" value="TreeGrafter"/>
</dbReference>
<dbReference type="GO" id="GO:0003735">
    <property type="term" value="F:structural constituent of ribosome"/>
    <property type="evidence" value="ECO:0007669"/>
    <property type="project" value="InterPro"/>
</dbReference>
<dbReference type="GO" id="GO:0006412">
    <property type="term" value="P:translation"/>
    <property type="evidence" value="ECO:0007669"/>
    <property type="project" value="UniProtKB-UniRule"/>
</dbReference>
<dbReference type="FunFam" id="3.30.230.10:FF:000001">
    <property type="entry name" value="30S ribosomal protein S9"/>
    <property type="match status" value="1"/>
</dbReference>
<dbReference type="Gene3D" id="3.30.230.10">
    <property type="match status" value="1"/>
</dbReference>
<dbReference type="HAMAP" id="MF_00532_B">
    <property type="entry name" value="Ribosomal_uS9_B"/>
    <property type="match status" value="1"/>
</dbReference>
<dbReference type="InterPro" id="IPR020568">
    <property type="entry name" value="Ribosomal_Su5_D2-typ_SF"/>
</dbReference>
<dbReference type="InterPro" id="IPR000754">
    <property type="entry name" value="Ribosomal_uS9"/>
</dbReference>
<dbReference type="InterPro" id="IPR023035">
    <property type="entry name" value="Ribosomal_uS9_bac/plastid"/>
</dbReference>
<dbReference type="InterPro" id="IPR020574">
    <property type="entry name" value="Ribosomal_uS9_CS"/>
</dbReference>
<dbReference type="InterPro" id="IPR014721">
    <property type="entry name" value="Ribsml_uS5_D2-typ_fold_subgr"/>
</dbReference>
<dbReference type="NCBIfam" id="NF001099">
    <property type="entry name" value="PRK00132.1"/>
    <property type="match status" value="1"/>
</dbReference>
<dbReference type="PANTHER" id="PTHR21569">
    <property type="entry name" value="RIBOSOMAL PROTEIN S9"/>
    <property type="match status" value="1"/>
</dbReference>
<dbReference type="PANTHER" id="PTHR21569:SF1">
    <property type="entry name" value="SMALL RIBOSOMAL SUBUNIT PROTEIN US9M"/>
    <property type="match status" value="1"/>
</dbReference>
<dbReference type="Pfam" id="PF00380">
    <property type="entry name" value="Ribosomal_S9"/>
    <property type="match status" value="1"/>
</dbReference>
<dbReference type="SUPFAM" id="SSF54211">
    <property type="entry name" value="Ribosomal protein S5 domain 2-like"/>
    <property type="match status" value="1"/>
</dbReference>
<dbReference type="PROSITE" id="PS00360">
    <property type="entry name" value="RIBOSOMAL_S9"/>
    <property type="match status" value="1"/>
</dbReference>
<keyword id="KW-0687">Ribonucleoprotein</keyword>
<keyword id="KW-0689">Ribosomal protein</keyword>
<protein>
    <recommendedName>
        <fullName evidence="1">Small ribosomal subunit protein uS9</fullName>
    </recommendedName>
    <alternativeName>
        <fullName evidence="2">30S ribosomal protein S9</fullName>
    </alternativeName>
</protein>
<comment type="similarity">
    <text evidence="1">Belongs to the universal ribosomal protein uS9 family.</text>
</comment>
<evidence type="ECO:0000255" key="1">
    <source>
        <dbReference type="HAMAP-Rule" id="MF_00532"/>
    </source>
</evidence>
<evidence type="ECO:0000305" key="2"/>
<organism>
    <name type="scientific">Burkholderia vietnamiensis (strain G4 / LMG 22486)</name>
    <name type="common">Burkholderia cepacia (strain R1808)</name>
    <dbReference type="NCBI Taxonomy" id="269482"/>
    <lineage>
        <taxon>Bacteria</taxon>
        <taxon>Pseudomonadati</taxon>
        <taxon>Pseudomonadota</taxon>
        <taxon>Betaproteobacteria</taxon>
        <taxon>Burkholderiales</taxon>
        <taxon>Burkholderiaceae</taxon>
        <taxon>Burkholderia</taxon>
        <taxon>Burkholderia cepacia complex</taxon>
    </lineage>
</organism>
<name>RS9_BURVG</name>
<feature type="chain" id="PRO_1000051193" description="Small ribosomal subunit protein uS9">
    <location>
        <begin position="1"/>
        <end position="130"/>
    </location>
</feature>
<gene>
    <name evidence="1" type="primary">rpsI</name>
    <name type="ordered locus">Bcep1808_0646</name>
</gene>
<accession>A4JBK5</accession>
<sequence length="130" mass="14343">MIGNWNYGTGRRKSAVARVFIKAGKGDIIVNGKPIADYFSRETSLMIVRQPLELTNHGQTFDIKVNVNGGGETGQAGAVRHGITRALIDYDATLKPSLSNAGFVTRDAREVERKKVGLRKARRAKQFSKR</sequence>
<reference key="1">
    <citation type="submission" date="2007-03" db="EMBL/GenBank/DDBJ databases">
        <title>Complete sequence of chromosome 1 of Burkholderia vietnamiensis G4.</title>
        <authorList>
            <consortium name="US DOE Joint Genome Institute"/>
            <person name="Copeland A."/>
            <person name="Lucas S."/>
            <person name="Lapidus A."/>
            <person name="Barry K."/>
            <person name="Detter J.C."/>
            <person name="Glavina del Rio T."/>
            <person name="Hammon N."/>
            <person name="Israni S."/>
            <person name="Dalin E."/>
            <person name="Tice H."/>
            <person name="Pitluck S."/>
            <person name="Chain P."/>
            <person name="Malfatti S."/>
            <person name="Shin M."/>
            <person name="Vergez L."/>
            <person name="Schmutz J."/>
            <person name="Larimer F."/>
            <person name="Land M."/>
            <person name="Hauser L."/>
            <person name="Kyrpides N."/>
            <person name="Tiedje J."/>
            <person name="Richardson P."/>
        </authorList>
    </citation>
    <scope>NUCLEOTIDE SEQUENCE [LARGE SCALE GENOMIC DNA]</scope>
    <source>
        <strain>G4 / LMG 22486</strain>
    </source>
</reference>
<proteinExistence type="inferred from homology"/>